<comment type="function">
    <text evidence="1">Catalyzes the ATP-dependent phosphorylation of L-homoserine to L-homoserine phosphate.</text>
</comment>
<comment type="catalytic activity">
    <reaction evidence="1">
        <text>L-homoserine + ATP = O-phospho-L-homoserine + ADP + H(+)</text>
        <dbReference type="Rhea" id="RHEA:13985"/>
        <dbReference type="ChEBI" id="CHEBI:15378"/>
        <dbReference type="ChEBI" id="CHEBI:30616"/>
        <dbReference type="ChEBI" id="CHEBI:57476"/>
        <dbReference type="ChEBI" id="CHEBI:57590"/>
        <dbReference type="ChEBI" id="CHEBI:456216"/>
        <dbReference type="EC" id="2.7.1.39"/>
    </reaction>
</comment>
<comment type="pathway">
    <text evidence="1">Amino-acid biosynthesis; L-threonine biosynthesis; L-threonine from L-aspartate: step 4/5.</text>
</comment>
<comment type="subcellular location">
    <subcellularLocation>
        <location evidence="1">Cytoplasm</location>
    </subcellularLocation>
</comment>
<comment type="similarity">
    <text evidence="1">Belongs to the GHMP kinase family. Homoserine kinase subfamily.</text>
</comment>
<dbReference type="EC" id="2.7.1.39" evidence="1"/>
<dbReference type="EMBL" id="AP009324">
    <property type="protein sequence ID" value="BAF78202.1"/>
    <property type="molecule type" value="Genomic_DNA"/>
</dbReference>
<dbReference type="RefSeq" id="WP_000073180.1">
    <property type="nucleotide sequence ID" value="NC_009782.1"/>
</dbReference>
<dbReference type="SMR" id="A7X1Y2"/>
<dbReference type="KEGG" id="saw:SAHV_1319"/>
<dbReference type="HOGENOM" id="CLU_041243_0_0_9"/>
<dbReference type="UniPathway" id="UPA00050">
    <property type="reaction ID" value="UER00064"/>
</dbReference>
<dbReference type="GO" id="GO:0005737">
    <property type="term" value="C:cytoplasm"/>
    <property type="evidence" value="ECO:0007669"/>
    <property type="project" value="UniProtKB-SubCell"/>
</dbReference>
<dbReference type="GO" id="GO:0005524">
    <property type="term" value="F:ATP binding"/>
    <property type="evidence" value="ECO:0007669"/>
    <property type="project" value="UniProtKB-UniRule"/>
</dbReference>
<dbReference type="GO" id="GO:0004413">
    <property type="term" value="F:homoserine kinase activity"/>
    <property type="evidence" value="ECO:0007669"/>
    <property type="project" value="UniProtKB-UniRule"/>
</dbReference>
<dbReference type="GO" id="GO:0009088">
    <property type="term" value="P:threonine biosynthetic process"/>
    <property type="evidence" value="ECO:0007669"/>
    <property type="project" value="UniProtKB-UniRule"/>
</dbReference>
<dbReference type="Gene3D" id="3.30.230.10">
    <property type="match status" value="1"/>
</dbReference>
<dbReference type="Gene3D" id="3.30.70.890">
    <property type="entry name" value="GHMP kinase, C-terminal domain"/>
    <property type="match status" value="1"/>
</dbReference>
<dbReference type="HAMAP" id="MF_00384">
    <property type="entry name" value="Homoser_kinase"/>
    <property type="match status" value="1"/>
</dbReference>
<dbReference type="InterPro" id="IPR013750">
    <property type="entry name" value="GHMP_kinase_C_dom"/>
</dbReference>
<dbReference type="InterPro" id="IPR036554">
    <property type="entry name" value="GHMP_kinase_C_sf"/>
</dbReference>
<dbReference type="InterPro" id="IPR006204">
    <property type="entry name" value="GHMP_kinase_N_dom"/>
</dbReference>
<dbReference type="InterPro" id="IPR006203">
    <property type="entry name" value="GHMP_knse_ATP-bd_CS"/>
</dbReference>
<dbReference type="InterPro" id="IPR000870">
    <property type="entry name" value="Homoserine_kinase"/>
</dbReference>
<dbReference type="InterPro" id="IPR020568">
    <property type="entry name" value="Ribosomal_Su5_D2-typ_SF"/>
</dbReference>
<dbReference type="InterPro" id="IPR014721">
    <property type="entry name" value="Ribsml_uS5_D2-typ_fold_subgr"/>
</dbReference>
<dbReference type="NCBIfam" id="TIGR00191">
    <property type="entry name" value="thrB"/>
    <property type="match status" value="1"/>
</dbReference>
<dbReference type="PANTHER" id="PTHR20861:SF1">
    <property type="entry name" value="HOMOSERINE KINASE"/>
    <property type="match status" value="1"/>
</dbReference>
<dbReference type="PANTHER" id="PTHR20861">
    <property type="entry name" value="HOMOSERINE/4-DIPHOSPHOCYTIDYL-2-C-METHYL-D-ERYTHRITOL KINASE"/>
    <property type="match status" value="1"/>
</dbReference>
<dbReference type="Pfam" id="PF08544">
    <property type="entry name" value="GHMP_kinases_C"/>
    <property type="match status" value="1"/>
</dbReference>
<dbReference type="Pfam" id="PF00288">
    <property type="entry name" value="GHMP_kinases_N"/>
    <property type="match status" value="1"/>
</dbReference>
<dbReference type="PIRSF" id="PIRSF000676">
    <property type="entry name" value="Homoser_kin"/>
    <property type="match status" value="1"/>
</dbReference>
<dbReference type="PRINTS" id="PR00958">
    <property type="entry name" value="HOMSERKINASE"/>
</dbReference>
<dbReference type="SUPFAM" id="SSF55060">
    <property type="entry name" value="GHMP Kinase, C-terminal domain"/>
    <property type="match status" value="1"/>
</dbReference>
<dbReference type="SUPFAM" id="SSF54211">
    <property type="entry name" value="Ribosomal protein S5 domain 2-like"/>
    <property type="match status" value="1"/>
</dbReference>
<dbReference type="PROSITE" id="PS00627">
    <property type="entry name" value="GHMP_KINASES_ATP"/>
    <property type="match status" value="1"/>
</dbReference>
<proteinExistence type="inferred from homology"/>
<evidence type="ECO:0000255" key="1">
    <source>
        <dbReference type="HAMAP-Rule" id="MF_00384"/>
    </source>
</evidence>
<name>KHSE_STAA1</name>
<sequence length="304" mass="33250">MSNVLELTIPASTANLGVGFDSIGMALDKFLHLSVKETSGTKWEYIFHDDASKQLPTDETNFIYHVAQQVASKYSVDLPILCIEMRSDIPLARGLGSSASALVGAIYIANYFGDIQLSKHEVLQLATEIEGHPDNVAPTIYGGLIAGFYNDVSKETSVAHIDIPDVDVIVTIPTYELKTEASRRALPQKLTHSEAVKSSAISNTMICALAQHNYELAGKLMQQDGFHEPYRQHLIAEFDEVKTIASQHNAYATVISGAGPTILIFSRKENSGELVRSLNSQVVSCHSELVDINISGVKERIVYQ</sequence>
<organism>
    <name type="scientific">Staphylococcus aureus (strain Mu3 / ATCC 700698)</name>
    <dbReference type="NCBI Taxonomy" id="418127"/>
    <lineage>
        <taxon>Bacteria</taxon>
        <taxon>Bacillati</taxon>
        <taxon>Bacillota</taxon>
        <taxon>Bacilli</taxon>
        <taxon>Bacillales</taxon>
        <taxon>Staphylococcaceae</taxon>
        <taxon>Staphylococcus</taxon>
    </lineage>
</organism>
<keyword id="KW-0028">Amino-acid biosynthesis</keyword>
<keyword id="KW-0067">ATP-binding</keyword>
<keyword id="KW-0963">Cytoplasm</keyword>
<keyword id="KW-0418">Kinase</keyword>
<keyword id="KW-0547">Nucleotide-binding</keyword>
<keyword id="KW-0791">Threonine biosynthesis</keyword>
<keyword id="KW-0808">Transferase</keyword>
<protein>
    <recommendedName>
        <fullName evidence="1">Homoserine kinase</fullName>
        <shortName evidence="1">HK</shortName>
        <shortName evidence="1">HSK</shortName>
        <ecNumber evidence="1">2.7.1.39</ecNumber>
    </recommendedName>
</protein>
<gene>
    <name evidence="1" type="primary">thrB</name>
    <name type="ordered locus">SAHV_1319</name>
</gene>
<accession>A7X1Y2</accession>
<reference key="1">
    <citation type="journal article" date="2008" name="Antimicrob. Agents Chemother.">
        <title>Mutated response regulator graR is responsible for phenotypic conversion of Staphylococcus aureus from heterogeneous vancomycin-intermediate resistance to vancomycin-intermediate resistance.</title>
        <authorList>
            <person name="Neoh H.-M."/>
            <person name="Cui L."/>
            <person name="Yuzawa H."/>
            <person name="Takeuchi F."/>
            <person name="Matsuo M."/>
            <person name="Hiramatsu K."/>
        </authorList>
    </citation>
    <scope>NUCLEOTIDE SEQUENCE [LARGE SCALE GENOMIC DNA]</scope>
    <source>
        <strain>Mu3 / ATCC 700698</strain>
    </source>
</reference>
<feature type="chain" id="PRO_1000049169" description="Homoserine kinase">
    <location>
        <begin position="1"/>
        <end position="304"/>
    </location>
</feature>
<feature type="binding site" evidence="1">
    <location>
        <begin position="90"/>
        <end position="100"/>
    </location>
    <ligand>
        <name>ATP</name>
        <dbReference type="ChEBI" id="CHEBI:30616"/>
    </ligand>
</feature>